<sequence>MASVTDGKTGVKDASDQNFDYMFKLLIIGNSSVGKTSFLFRYADDTFTPAFVSTVGIDFKVKTVYRHEKRVKLQIWDTAGQERYRTITTAYYRGAMGFILMYDITNEESFNAVQDWATQIKTYSWDNAQVILVGNKCDMEEERVVPTEKGQLLAEQLGFDFFEASAKENISVRQAFERLVDAICDKMSDSLDTDPSMLGSSKNTRLSDTPPLLQQNCSC</sequence>
<evidence type="ECO:0000250" key="1"/>
<evidence type="ECO:0000250" key="2">
    <source>
        <dbReference type="UniProtKB" id="O95716"/>
    </source>
</evidence>
<evidence type="ECO:0000250" key="3">
    <source>
        <dbReference type="UniProtKB" id="P20336"/>
    </source>
</evidence>
<evidence type="ECO:0000250" key="4">
    <source>
        <dbReference type="UniProtKB" id="Q63941"/>
    </source>
</evidence>
<evidence type="ECO:0000250" key="5">
    <source>
        <dbReference type="UniProtKB" id="Q9CZT8"/>
    </source>
</evidence>
<evidence type="ECO:0000269" key="6">
    <source>
    </source>
</evidence>
<evidence type="ECO:0000269" key="7">
    <source>
    </source>
</evidence>
<evidence type="ECO:0000269" key="8">
    <source ref="7"/>
</evidence>
<evidence type="ECO:0000305" key="9"/>
<evidence type="ECO:0000305" key="10">
    <source>
    </source>
</evidence>
<evidence type="ECO:0000312" key="11">
    <source>
        <dbReference type="HGNC" id="HGNC:9778"/>
    </source>
</evidence>
<evidence type="ECO:0007744" key="12">
    <source>
        <dbReference type="PDB" id="3DZ8"/>
    </source>
</evidence>
<evidence type="ECO:0007744" key="13">
    <source>
        <dbReference type="PDB" id="8A4B"/>
    </source>
</evidence>
<evidence type="ECO:0007744" key="14">
    <source>
        <dbReference type="PDB" id="8A4C"/>
    </source>
</evidence>
<evidence type="ECO:0007744" key="15">
    <source>
    </source>
</evidence>
<evidence type="ECO:0007829" key="16">
    <source>
        <dbReference type="PDB" id="3DZ8"/>
    </source>
</evidence>
<name>RAB3B_HUMAN</name>
<proteinExistence type="evidence at protein level"/>
<dbReference type="EC" id="3.6.5.2" evidence="10"/>
<dbReference type="EMBL" id="M28214">
    <property type="protein sequence ID" value="AAA60243.1"/>
    <property type="molecule type" value="mRNA"/>
</dbReference>
<dbReference type="EMBL" id="AF498932">
    <property type="protein sequence ID" value="AAM21080.1"/>
    <property type="molecule type" value="mRNA"/>
</dbReference>
<dbReference type="EMBL" id="AL589663">
    <property type="status" value="NOT_ANNOTATED_CDS"/>
    <property type="molecule type" value="Genomic_DNA"/>
</dbReference>
<dbReference type="EMBL" id="AL445685">
    <property type="status" value="NOT_ANNOTATED_CDS"/>
    <property type="molecule type" value="Genomic_DNA"/>
</dbReference>
<dbReference type="EMBL" id="BC005035">
    <property type="protein sequence ID" value="AAH05035.1"/>
    <property type="molecule type" value="mRNA"/>
</dbReference>
<dbReference type="CCDS" id="CCDS560.1"/>
<dbReference type="PIR" id="D34323">
    <property type="entry name" value="D34323"/>
</dbReference>
<dbReference type="RefSeq" id="NP_002858.2">
    <property type="nucleotide sequence ID" value="NM_002867.3"/>
</dbReference>
<dbReference type="RefSeq" id="XP_016857447.1">
    <property type="nucleotide sequence ID" value="XM_017001958.2"/>
</dbReference>
<dbReference type="RefSeq" id="XP_054193978.1">
    <property type="nucleotide sequence ID" value="XM_054338003.1"/>
</dbReference>
<dbReference type="PDB" id="3DZ8">
    <property type="method" value="X-ray"/>
    <property type="resolution" value="1.90 A"/>
    <property type="chains" value="A=18-190"/>
</dbReference>
<dbReference type="PDB" id="8A4B">
    <property type="method" value="X-ray"/>
    <property type="resolution" value="2.80 A"/>
    <property type="chains" value="B/D=17-190"/>
</dbReference>
<dbReference type="PDB" id="8A4C">
    <property type="method" value="X-ray"/>
    <property type="resolution" value="2.75 A"/>
    <property type="chains" value="B/D=1-219"/>
</dbReference>
<dbReference type="PDBsum" id="3DZ8"/>
<dbReference type="PDBsum" id="8A4B"/>
<dbReference type="PDBsum" id="8A4C"/>
<dbReference type="SMR" id="P20337"/>
<dbReference type="BioGRID" id="111803">
    <property type="interactions" value="367"/>
</dbReference>
<dbReference type="FunCoup" id="P20337">
    <property type="interactions" value="1248"/>
</dbReference>
<dbReference type="IntAct" id="P20337">
    <property type="interactions" value="44"/>
</dbReference>
<dbReference type="MINT" id="P20337"/>
<dbReference type="STRING" id="9606.ENSP00000360718"/>
<dbReference type="GlyGen" id="P20337">
    <property type="glycosylation" value="1 site, 1 O-linked glycan (1 site)"/>
</dbReference>
<dbReference type="iPTMnet" id="P20337"/>
<dbReference type="MetOSite" id="P20337"/>
<dbReference type="PhosphoSitePlus" id="P20337"/>
<dbReference type="SwissPalm" id="P20337"/>
<dbReference type="BioMuta" id="RAB3B"/>
<dbReference type="DMDM" id="38258903"/>
<dbReference type="jPOST" id="P20337"/>
<dbReference type="MassIVE" id="P20337"/>
<dbReference type="PaxDb" id="9606-ENSP00000360718"/>
<dbReference type="PeptideAtlas" id="P20337"/>
<dbReference type="ProteomicsDB" id="53749"/>
<dbReference type="Pumba" id="P20337"/>
<dbReference type="Antibodypedia" id="19062">
    <property type="antibodies" value="167 antibodies from 25 providers"/>
</dbReference>
<dbReference type="DNASU" id="5865"/>
<dbReference type="Ensembl" id="ENST00000371655.4">
    <property type="protein sequence ID" value="ENSP00000360718.3"/>
    <property type="gene ID" value="ENSG00000169213.7"/>
</dbReference>
<dbReference type="GeneID" id="5865"/>
<dbReference type="KEGG" id="hsa:5865"/>
<dbReference type="MANE-Select" id="ENST00000371655.4">
    <property type="protein sequence ID" value="ENSP00000360718.3"/>
    <property type="RefSeq nucleotide sequence ID" value="NM_002867.4"/>
    <property type="RefSeq protein sequence ID" value="NP_002858.2"/>
</dbReference>
<dbReference type="UCSC" id="uc001cth.3">
    <property type="organism name" value="human"/>
</dbReference>
<dbReference type="AGR" id="HGNC:9778"/>
<dbReference type="CTD" id="5865"/>
<dbReference type="DisGeNET" id="5865"/>
<dbReference type="GeneCards" id="RAB3B"/>
<dbReference type="HGNC" id="HGNC:9778">
    <property type="gene designation" value="RAB3B"/>
</dbReference>
<dbReference type="HPA" id="ENSG00000169213">
    <property type="expression patterns" value="Tissue enhanced (brain, pituitary gland, prostate)"/>
</dbReference>
<dbReference type="MIM" id="179510">
    <property type="type" value="gene"/>
</dbReference>
<dbReference type="neXtProt" id="NX_P20337"/>
<dbReference type="OpenTargets" id="ENSG00000169213"/>
<dbReference type="PharmGKB" id="PA34133"/>
<dbReference type="VEuPathDB" id="HostDB:ENSG00000169213"/>
<dbReference type="eggNOG" id="KOG0093">
    <property type="taxonomic scope" value="Eukaryota"/>
</dbReference>
<dbReference type="GeneTree" id="ENSGT00940000159943"/>
<dbReference type="HOGENOM" id="CLU_041217_10_1_1"/>
<dbReference type="InParanoid" id="P20337"/>
<dbReference type="OMA" id="AICEKMS"/>
<dbReference type="OrthoDB" id="9989112at2759"/>
<dbReference type="PAN-GO" id="P20337">
    <property type="GO annotations" value="9 GO annotations based on evolutionary models"/>
</dbReference>
<dbReference type="PhylomeDB" id="P20337"/>
<dbReference type="TreeFam" id="TF313199"/>
<dbReference type="PathwayCommons" id="P20337"/>
<dbReference type="Reactome" id="R-HSA-8873719">
    <property type="pathway name" value="RAB geranylgeranylation"/>
</dbReference>
<dbReference type="SignaLink" id="P20337"/>
<dbReference type="BioGRID-ORCS" id="5865">
    <property type="hits" value="9 hits in 1154 CRISPR screens"/>
</dbReference>
<dbReference type="ChiTaRS" id="RAB3B">
    <property type="organism name" value="human"/>
</dbReference>
<dbReference type="EvolutionaryTrace" id="P20337"/>
<dbReference type="GeneWiki" id="RAB3B"/>
<dbReference type="GenomeRNAi" id="5865"/>
<dbReference type="Pharos" id="P20337">
    <property type="development level" value="Tbio"/>
</dbReference>
<dbReference type="PRO" id="PR:P20337"/>
<dbReference type="Proteomes" id="UP000005640">
    <property type="component" value="Chromosome 1"/>
</dbReference>
<dbReference type="RNAct" id="P20337">
    <property type="molecule type" value="protein"/>
</dbReference>
<dbReference type="Bgee" id="ENSG00000169213">
    <property type="expression patterns" value="Expressed in islet of Langerhans and 103 other cell types or tissues"/>
</dbReference>
<dbReference type="GO" id="GO:0005737">
    <property type="term" value="C:cytoplasm"/>
    <property type="evidence" value="ECO:0000314"/>
    <property type="project" value="UniProtKB"/>
</dbReference>
<dbReference type="GO" id="GO:0098691">
    <property type="term" value="C:dopaminergic synapse"/>
    <property type="evidence" value="ECO:0000314"/>
    <property type="project" value="SynGO"/>
</dbReference>
<dbReference type="GO" id="GO:0005768">
    <property type="term" value="C:endosome"/>
    <property type="evidence" value="ECO:0000318"/>
    <property type="project" value="GO_Central"/>
</dbReference>
<dbReference type="GO" id="GO:0070062">
    <property type="term" value="C:extracellular exosome"/>
    <property type="evidence" value="ECO:0007005"/>
    <property type="project" value="UniProtKB"/>
</dbReference>
<dbReference type="GO" id="GO:0005794">
    <property type="term" value="C:Golgi apparatus"/>
    <property type="evidence" value="ECO:0007669"/>
    <property type="project" value="UniProtKB-SubCell"/>
</dbReference>
<dbReference type="GO" id="GO:0048471">
    <property type="term" value="C:perinuclear region of cytoplasm"/>
    <property type="evidence" value="ECO:0000314"/>
    <property type="project" value="UniProtKB"/>
</dbReference>
<dbReference type="GO" id="GO:0005886">
    <property type="term" value="C:plasma membrane"/>
    <property type="evidence" value="ECO:0000318"/>
    <property type="project" value="GO_Central"/>
</dbReference>
<dbReference type="GO" id="GO:0030141">
    <property type="term" value="C:secretory granule"/>
    <property type="evidence" value="ECO:0007669"/>
    <property type="project" value="Ensembl"/>
</dbReference>
<dbReference type="GO" id="GO:0008021">
    <property type="term" value="C:synaptic vesicle"/>
    <property type="evidence" value="ECO:0000318"/>
    <property type="project" value="GO_Central"/>
</dbReference>
<dbReference type="GO" id="GO:0030672">
    <property type="term" value="C:synaptic vesicle membrane"/>
    <property type="evidence" value="ECO:0000314"/>
    <property type="project" value="SynGO"/>
</dbReference>
<dbReference type="GO" id="GO:0031982">
    <property type="term" value="C:vesicle"/>
    <property type="evidence" value="ECO:0000314"/>
    <property type="project" value="UniProtKB"/>
</dbReference>
<dbReference type="GO" id="GO:0019003">
    <property type="term" value="F:GDP binding"/>
    <property type="evidence" value="ECO:0000314"/>
    <property type="project" value="UniProtKB"/>
</dbReference>
<dbReference type="GO" id="GO:0005525">
    <property type="term" value="F:GTP binding"/>
    <property type="evidence" value="ECO:0007669"/>
    <property type="project" value="UniProtKB-KW"/>
</dbReference>
<dbReference type="GO" id="GO:0030742">
    <property type="term" value="F:GTP-dependent protein binding"/>
    <property type="evidence" value="ECO:0007669"/>
    <property type="project" value="Ensembl"/>
</dbReference>
<dbReference type="GO" id="GO:0003924">
    <property type="term" value="F:GTPase activity"/>
    <property type="evidence" value="ECO:0000314"/>
    <property type="project" value="UniProtKB"/>
</dbReference>
<dbReference type="GO" id="GO:0031489">
    <property type="term" value="F:myosin V binding"/>
    <property type="evidence" value="ECO:0000353"/>
    <property type="project" value="UniProtKB"/>
</dbReference>
<dbReference type="GO" id="GO:0019882">
    <property type="term" value="P:antigen processing and presentation"/>
    <property type="evidence" value="ECO:0000315"/>
    <property type="project" value="UniProtKB"/>
</dbReference>
<dbReference type="GO" id="GO:0006887">
    <property type="term" value="P:exocytosis"/>
    <property type="evidence" value="ECO:0000318"/>
    <property type="project" value="GO_Central"/>
</dbReference>
<dbReference type="GO" id="GO:0051586">
    <property type="term" value="P:positive regulation of dopamine uptake involved in synaptic transmission"/>
    <property type="evidence" value="ECO:0000314"/>
    <property type="project" value="UniProtKB"/>
</dbReference>
<dbReference type="GO" id="GO:0015031">
    <property type="term" value="P:protein transport"/>
    <property type="evidence" value="ECO:0007669"/>
    <property type="project" value="UniProtKB-KW"/>
</dbReference>
<dbReference type="GO" id="GO:0017157">
    <property type="term" value="P:regulation of exocytosis"/>
    <property type="evidence" value="ECO:0007669"/>
    <property type="project" value="Ensembl"/>
</dbReference>
<dbReference type="GO" id="GO:0098693">
    <property type="term" value="P:regulation of synaptic vesicle cycle"/>
    <property type="evidence" value="ECO:0000314"/>
    <property type="project" value="SynGO"/>
</dbReference>
<dbReference type="GO" id="GO:0097494">
    <property type="term" value="P:regulation of vesicle size"/>
    <property type="evidence" value="ECO:0000314"/>
    <property type="project" value="UniProtKB"/>
</dbReference>
<dbReference type="CDD" id="cd01865">
    <property type="entry name" value="Rab3"/>
    <property type="match status" value="1"/>
</dbReference>
<dbReference type="FunFam" id="3.40.50.300:FF:000206">
    <property type="entry name" value="Ras-related protein Rab-3C"/>
    <property type="match status" value="1"/>
</dbReference>
<dbReference type="Gene3D" id="3.40.50.300">
    <property type="entry name" value="P-loop containing nucleotide triphosphate hydrolases"/>
    <property type="match status" value="1"/>
</dbReference>
<dbReference type="InterPro" id="IPR027417">
    <property type="entry name" value="P-loop_NTPase"/>
</dbReference>
<dbReference type="InterPro" id="IPR037872">
    <property type="entry name" value="Rab3"/>
</dbReference>
<dbReference type="InterPro" id="IPR005225">
    <property type="entry name" value="Small_GTP-bd"/>
</dbReference>
<dbReference type="InterPro" id="IPR001806">
    <property type="entry name" value="Small_GTPase"/>
</dbReference>
<dbReference type="InterPro" id="IPR050305">
    <property type="entry name" value="Small_GTPase_Rab"/>
</dbReference>
<dbReference type="NCBIfam" id="TIGR00231">
    <property type="entry name" value="small_GTP"/>
    <property type="match status" value="1"/>
</dbReference>
<dbReference type="PANTHER" id="PTHR47980">
    <property type="entry name" value="LD44762P"/>
    <property type="match status" value="1"/>
</dbReference>
<dbReference type="Pfam" id="PF00071">
    <property type="entry name" value="Ras"/>
    <property type="match status" value="1"/>
</dbReference>
<dbReference type="PRINTS" id="PR00449">
    <property type="entry name" value="RASTRNSFRMNG"/>
</dbReference>
<dbReference type="SMART" id="SM00175">
    <property type="entry name" value="RAB"/>
    <property type="match status" value="1"/>
</dbReference>
<dbReference type="SMART" id="SM00176">
    <property type="entry name" value="RAN"/>
    <property type="match status" value="1"/>
</dbReference>
<dbReference type="SMART" id="SM00173">
    <property type="entry name" value="RAS"/>
    <property type="match status" value="1"/>
</dbReference>
<dbReference type="SMART" id="SM00174">
    <property type="entry name" value="RHO"/>
    <property type="match status" value="1"/>
</dbReference>
<dbReference type="SUPFAM" id="SSF52540">
    <property type="entry name" value="P-loop containing nucleoside triphosphate hydrolases"/>
    <property type="match status" value="1"/>
</dbReference>
<dbReference type="PROSITE" id="PS51419">
    <property type="entry name" value="RAB"/>
    <property type="match status" value="1"/>
</dbReference>
<protein>
    <recommendedName>
        <fullName>Ras-related protein Rab-3B</fullName>
        <ecNumber evidence="10">3.6.5.2</ecNumber>
    </recommendedName>
</protein>
<reference key="1">
    <citation type="journal article" date="1989" name="J. Biol. Chem.">
        <title>The human Rab genes encode a family of GTP-binding proteins related to yeast YPT1 and SEC4 products involved in secretion.</title>
        <authorList>
            <person name="Zahraoui A."/>
            <person name="Touchot N."/>
            <person name="Chardin P."/>
            <person name="Tavitian A."/>
        </authorList>
    </citation>
    <scope>NUCLEOTIDE SEQUENCE [MRNA]</scope>
</reference>
<reference key="2">
    <citation type="submission" date="2002-04" db="EMBL/GenBank/DDBJ databases">
        <title>cDNA clones of human proteins involved in signal transduction sequenced by the Guthrie cDNA resource center (www.cdna.org).</title>
        <authorList>
            <person name="Puhl H.L. III"/>
            <person name="Ikeda S.R."/>
            <person name="Aronstam R.S."/>
        </authorList>
    </citation>
    <scope>NUCLEOTIDE SEQUENCE [LARGE SCALE MRNA]</scope>
    <source>
        <tissue>Brain</tissue>
    </source>
</reference>
<reference key="3">
    <citation type="journal article" date="2006" name="Nature">
        <title>The DNA sequence and biological annotation of human chromosome 1.</title>
        <authorList>
            <person name="Gregory S.G."/>
            <person name="Barlow K.F."/>
            <person name="McLay K.E."/>
            <person name="Kaul R."/>
            <person name="Swarbreck D."/>
            <person name="Dunham A."/>
            <person name="Scott C.E."/>
            <person name="Howe K.L."/>
            <person name="Woodfine K."/>
            <person name="Spencer C.C.A."/>
            <person name="Jones M.C."/>
            <person name="Gillson C."/>
            <person name="Searle S."/>
            <person name="Zhou Y."/>
            <person name="Kokocinski F."/>
            <person name="McDonald L."/>
            <person name="Evans R."/>
            <person name="Phillips K."/>
            <person name="Atkinson A."/>
            <person name="Cooper R."/>
            <person name="Jones C."/>
            <person name="Hall R.E."/>
            <person name="Andrews T.D."/>
            <person name="Lloyd C."/>
            <person name="Ainscough R."/>
            <person name="Almeida J.P."/>
            <person name="Ambrose K.D."/>
            <person name="Anderson F."/>
            <person name="Andrew R.W."/>
            <person name="Ashwell R.I.S."/>
            <person name="Aubin K."/>
            <person name="Babbage A.K."/>
            <person name="Bagguley C.L."/>
            <person name="Bailey J."/>
            <person name="Beasley H."/>
            <person name="Bethel G."/>
            <person name="Bird C.P."/>
            <person name="Bray-Allen S."/>
            <person name="Brown J.Y."/>
            <person name="Brown A.J."/>
            <person name="Buckley D."/>
            <person name="Burton J."/>
            <person name="Bye J."/>
            <person name="Carder C."/>
            <person name="Chapman J.C."/>
            <person name="Clark S.Y."/>
            <person name="Clarke G."/>
            <person name="Clee C."/>
            <person name="Cobley V."/>
            <person name="Collier R.E."/>
            <person name="Corby N."/>
            <person name="Coville G.J."/>
            <person name="Davies J."/>
            <person name="Deadman R."/>
            <person name="Dunn M."/>
            <person name="Earthrowl M."/>
            <person name="Ellington A.G."/>
            <person name="Errington H."/>
            <person name="Frankish A."/>
            <person name="Frankland J."/>
            <person name="French L."/>
            <person name="Garner P."/>
            <person name="Garnett J."/>
            <person name="Gay L."/>
            <person name="Ghori M.R.J."/>
            <person name="Gibson R."/>
            <person name="Gilby L.M."/>
            <person name="Gillett W."/>
            <person name="Glithero R.J."/>
            <person name="Grafham D.V."/>
            <person name="Griffiths C."/>
            <person name="Griffiths-Jones S."/>
            <person name="Grocock R."/>
            <person name="Hammond S."/>
            <person name="Harrison E.S.I."/>
            <person name="Hart E."/>
            <person name="Haugen E."/>
            <person name="Heath P.D."/>
            <person name="Holmes S."/>
            <person name="Holt K."/>
            <person name="Howden P.J."/>
            <person name="Hunt A.R."/>
            <person name="Hunt S.E."/>
            <person name="Hunter G."/>
            <person name="Isherwood J."/>
            <person name="James R."/>
            <person name="Johnson C."/>
            <person name="Johnson D."/>
            <person name="Joy A."/>
            <person name="Kay M."/>
            <person name="Kershaw J.K."/>
            <person name="Kibukawa M."/>
            <person name="Kimberley A.M."/>
            <person name="King A."/>
            <person name="Knights A.J."/>
            <person name="Lad H."/>
            <person name="Laird G."/>
            <person name="Lawlor S."/>
            <person name="Leongamornlert D.A."/>
            <person name="Lloyd D.M."/>
            <person name="Loveland J."/>
            <person name="Lovell J."/>
            <person name="Lush M.J."/>
            <person name="Lyne R."/>
            <person name="Martin S."/>
            <person name="Mashreghi-Mohammadi M."/>
            <person name="Matthews L."/>
            <person name="Matthews N.S.W."/>
            <person name="McLaren S."/>
            <person name="Milne S."/>
            <person name="Mistry S."/>
            <person name="Moore M.J.F."/>
            <person name="Nickerson T."/>
            <person name="O'Dell C.N."/>
            <person name="Oliver K."/>
            <person name="Palmeiri A."/>
            <person name="Palmer S.A."/>
            <person name="Parker A."/>
            <person name="Patel D."/>
            <person name="Pearce A.V."/>
            <person name="Peck A.I."/>
            <person name="Pelan S."/>
            <person name="Phelps K."/>
            <person name="Phillimore B.J."/>
            <person name="Plumb R."/>
            <person name="Rajan J."/>
            <person name="Raymond C."/>
            <person name="Rouse G."/>
            <person name="Saenphimmachak C."/>
            <person name="Sehra H.K."/>
            <person name="Sheridan E."/>
            <person name="Shownkeen R."/>
            <person name="Sims S."/>
            <person name="Skuce C.D."/>
            <person name="Smith M."/>
            <person name="Steward C."/>
            <person name="Subramanian S."/>
            <person name="Sycamore N."/>
            <person name="Tracey A."/>
            <person name="Tromans A."/>
            <person name="Van Helmond Z."/>
            <person name="Wall M."/>
            <person name="Wallis J.M."/>
            <person name="White S."/>
            <person name="Whitehead S.L."/>
            <person name="Wilkinson J.E."/>
            <person name="Willey D.L."/>
            <person name="Williams H."/>
            <person name="Wilming L."/>
            <person name="Wray P.W."/>
            <person name="Wu Z."/>
            <person name="Coulson A."/>
            <person name="Vaudin M."/>
            <person name="Sulston J.E."/>
            <person name="Durbin R.M."/>
            <person name="Hubbard T."/>
            <person name="Wooster R."/>
            <person name="Dunham I."/>
            <person name="Carter N.P."/>
            <person name="McVean G."/>
            <person name="Ross M.T."/>
            <person name="Harrow J."/>
            <person name="Olson M.V."/>
            <person name="Beck S."/>
            <person name="Rogers J."/>
            <person name="Bentley D.R."/>
        </authorList>
    </citation>
    <scope>NUCLEOTIDE SEQUENCE [LARGE SCALE GENOMIC DNA]</scope>
</reference>
<reference key="4">
    <citation type="journal article" date="2004" name="Genome Res.">
        <title>The status, quality, and expansion of the NIH full-length cDNA project: the Mammalian Gene Collection (MGC).</title>
        <authorList>
            <consortium name="The MGC Project Team"/>
        </authorList>
    </citation>
    <scope>NUCLEOTIDE SEQUENCE [LARGE SCALE MRNA]</scope>
    <source>
        <tissue>Lung</tissue>
    </source>
</reference>
<reference key="5">
    <citation type="journal article" date="2011" name="Sci. Signal.">
        <title>System-wide temporal characterization of the proteome and phosphoproteome of human embryonic stem cell differentiation.</title>
        <authorList>
            <person name="Rigbolt K.T."/>
            <person name="Prokhorova T.A."/>
            <person name="Akimov V."/>
            <person name="Henningsen J."/>
            <person name="Johansen P.T."/>
            <person name="Kratchmarova I."/>
            <person name="Kassem M."/>
            <person name="Mann M."/>
            <person name="Olsen J.V."/>
            <person name="Blagoev B."/>
        </authorList>
    </citation>
    <scope>PHOSPHORYLATION [LARGE SCALE ANALYSIS] AT SER-190</scope>
    <scope>IDENTIFICATION BY MASS SPECTROMETRY [LARGE SCALE ANALYSIS]</scope>
</reference>
<reference key="6">
    <citation type="journal article" date="2017" name="Elife">
        <title>Systematic proteomic analysis of LRRK2-mediated Rab GTPase phosphorylation establishes a connection to ciliogenesis.</title>
        <authorList>
            <person name="Steger M."/>
            <person name="Diez F."/>
            <person name="Dhekne H.S."/>
            <person name="Lis P."/>
            <person name="Nirujogi R.S."/>
            <person name="Karayel O."/>
            <person name="Tonelli F."/>
            <person name="Martinez T.N."/>
            <person name="Lorentzen E."/>
            <person name="Pfeffer S.R."/>
            <person name="Alessi D.R."/>
            <person name="Mann M."/>
        </authorList>
    </citation>
    <scope>INTERACTION WITH GDI2; CHM AND CHML</scope>
    <scope>PHOSPHORYLATION AT THR-86</scope>
    <scope>MUTAGENESIS OF THR-86</scope>
</reference>
<reference evidence="12" key="7">
    <citation type="submission" date="2009-02" db="PDB data bank">
        <title>Crystal structure of human RAB3B GTPase bound with GDP.</title>
        <authorList>
            <consortium name="Structural genomics consortium (SGC)"/>
        </authorList>
    </citation>
    <scope>X-RAY CRYSTALLOGRAPHY (1.9 ANGSTROMS) OF 18-190 IN COMPLEX WITH GDP</scope>
</reference>
<reference evidence="13 14" key="8">
    <citation type="journal article" date="2022" name="Nat. Commun.">
        <title>Rep15 interacts with several Rab GTPases and has a distinct fold for a Rab effector.</title>
        <authorList>
            <person name="Rai A."/>
            <person name="Singh A.K."/>
            <person name="Bleimling N."/>
            <person name="Posern G."/>
            <person name="Vetter I.R."/>
            <person name="Goody R.S."/>
        </authorList>
    </citation>
    <scope>X-RAY CRYSTALLOGRAPHY (2.75 ANGSTROMS) IN COMPLEX WITH GTP AND MG(2+)</scope>
    <scope>FUNCTION</scope>
    <scope>CATALYTIC ACTIVITY</scope>
    <scope>COFACTOR</scope>
    <scope>INTERACTION WITH REP15</scope>
    <scope>DOMAIN</scope>
</reference>
<keyword id="KW-0002">3D-structure</keyword>
<keyword id="KW-0007">Acetylation</keyword>
<keyword id="KW-1003">Cell membrane</keyword>
<keyword id="KW-0333">Golgi apparatus</keyword>
<keyword id="KW-0342">GTP-binding</keyword>
<keyword id="KW-0378">Hydrolase</keyword>
<keyword id="KW-0449">Lipoprotein</keyword>
<keyword id="KW-0472">Membrane</keyword>
<keyword id="KW-0488">Methylation</keyword>
<keyword id="KW-0547">Nucleotide-binding</keyword>
<keyword id="KW-0597">Phosphoprotein</keyword>
<keyword id="KW-0636">Prenylation</keyword>
<keyword id="KW-0653">Protein transport</keyword>
<keyword id="KW-1267">Proteomics identification</keyword>
<keyword id="KW-1185">Reference proteome</keyword>
<keyword id="KW-0813">Transport</keyword>
<gene>
    <name evidence="11" type="primary">RAB3B</name>
</gene>
<feature type="initiator methionine" description="Removed" evidence="2">
    <location>
        <position position="1"/>
    </location>
</feature>
<feature type="chain" id="PRO_0000121081" description="Ras-related protein Rab-3B">
    <location>
        <begin position="2"/>
        <end position="219"/>
    </location>
</feature>
<feature type="short sequence motif" description="Switch 1" evidence="7 13">
    <location>
        <begin position="45"/>
        <end position="58"/>
    </location>
</feature>
<feature type="short sequence motif" description="Switch 2" evidence="7 13">
    <location>
        <begin position="78"/>
        <end position="96"/>
    </location>
</feature>
<feature type="binding site" evidence="7 13">
    <location>
        <position position="31"/>
    </location>
    <ligand>
        <name>GTP</name>
        <dbReference type="ChEBI" id="CHEBI:37565"/>
    </ligand>
</feature>
<feature type="binding site" evidence="8 12">
    <location>
        <position position="32"/>
    </location>
    <ligand>
        <name>GDP</name>
        <dbReference type="ChEBI" id="CHEBI:58189"/>
    </ligand>
</feature>
<feature type="binding site" evidence="7 13">
    <location>
        <position position="32"/>
    </location>
    <ligand>
        <name>GTP</name>
        <dbReference type="ChEBI" id="CHEBI:37565"/>
    </ligand>
</feature>
<feature type="binding site" evidence="7 13">
    <location>
        <position position="33"/>
    </location>
    <ligand>
        <name>GTP</name>
        <dbReference type="ChEBI" id="CHEBI:37565"/>
    </ligand>
</feature>
<feature type="binding site" evidence="8 12">
    <location>
        <position position="34"/>
    </location>
    <ligand>
        <name>GDP</name>
        <dbReference type="ChEBI" id="CHEBI:58189"/>
    </ligand>
</feature>
<feature type="binding site" evidence="7 13">
    <location>
        <position position="34"/>
    </location>
    <ligand>
        <name>GTP</name>
        <dbReference type="ChEBI" id="CHEBI:37565"/>
    </ligand>
</feature>
<feature type="binding site" evidence="8 12">
    <location>
        <position position="35"/>
    </location>
    <ligand>
        <name>GDP</name>
        <dbReference type="ChEBI" id="CHEBI:58189"/>
    </ligand>
</feature>
<feature type="binding site" evidence="7 13">
    <location>
        <position position="35"/>
    </location>
    <ligand>
        <name>GTP</name>
        <dbReference type="ChEBI" id="CHEBI:37565"/>
    </ligand>
</feature>
<feature type="binding site" evidence="8 12">
    <location>
        <position position="36"/>
    </location>
    <ligand>
        <name>GDP</name>
        <dbReference type="ChEBI" id="CHEBI:58189"/>
    </ligand>
</feature>
<feature type="binding site" evidence="7 13">
    <location>
        <position position="36"/>
    </location>
    <ligand>
        <name>GTP</name>
        <dbReference type="ChEBI" id="CHEBI:37565"/>
    </ligand>
</feature>
<feature type="binding site" evidence="7 13 14">
    <location>
        <position position="36"/>
    </location>
    <ligand>
        <name>Mg(2+)</name>
        <dbReference type="ChEBI" id="CHEBI:18420"/>
    </ligand>
</feature>
<feature type="binding site" evidence="8 12">
    <location>
        <position position="37"/>
    </location>
    <ligand>
        <name>GDP</name>
        <dbReference type="ChEBI" id="CHEBI:58189"/>
    </ligand>
</feature>
<feature type="binding site" evidence="7 13">
    <location>
        <position position="37"/>
    </location>
    <ligand>
        <name>GTP</name>
        <dbReference type="ChEBI" id="CHEBI:37565"/>
    </ligand>
</feature>
<feature type="binding site" evidence="7 13">
    <location>
        <position position="49"/>
    </location>
    <ligand>
        <name>GTP</name>
        <dbReference type="ChEBI" id="CHEBI:37565"/>
    </ligand>
</feature>
<feature type="binding site" evidence="7 13">
    <location>
        <position position="53"/>
    </location>
    <ligand>
        <name>GTP</name>
        <dbReference type="ChEBI" id="CHEBI:37565"/>
    </ligand>
</feature>
<feature type="binding site" evidence="7 13 14">
    <location>
        <position position="54"/>
    </location>
    <ligand>
        <name>Mg(2+)</name>
        <dbReference type="ChEBI" id="CHEBI:18420"/>
    </ligand>
</feature>
<feature type="binding site" evidence="13 14">
    <location>
        <position position="77"/>
    </location>
    <ligand>
        <name>Mg(2+)</name>
        <dbReference type="ChEBI" id="CHEBI:18420"/>
    </ligand>
</feature>
<feature type="binding site" evidence="7 13">
    <location>
        <position position="80"/>
    </location>
    <ligand>
        <name>GTP</name>
        <dbReference type="ChEBI" id="CHEBI:37565"/>
    </ligand>
</feature>
<feature type="binding site" evidence="8 12">
    <location>
        <position position="135"/>
    </location>
    <ligand>
        <name>GDP</name>
        <dbReference type="ChEBI" id="CHEBI:58189"/>
    </ligand>
</feature>
<feature type="binding site" evidence="7 13">
    <location>
        <position position="135"/>
    </location>
    <ligand>
        <name>GTP</name>
        <dbReference type="ChEBI" id="CHEBI:37565"/>
    </ligand>
</feature>
<feature type="binding site" evidence="8 12">
    <location>
        <position position="136"/>
    </location>
    <ligand>
        <name>GDP</name>
        <dbReference type="ChEBI" id="CHEBI:58189"/>
    </ligand>
</feature>
<feature type="binding site" evidence="7 13">
    <location>
        <position position="136"/>
    </location>
    <ligand>
        <name>GTP</name>
        <dbReference type="ChEBI" id="CHEBI:37565"/>
    </ligand>
</feature>
<feature type="binding site" evidence="8 12">
    <location>
        <position position="138"/>
    </location>
    <ligand>
        <name>GDP</name>
        <dbReference type="ChEBI" id="CHEBI:58189"/>
    </ligand>
</feature>
<feature type="binding site" evidence="7 13">
    <location>
        <position position="138"/>
    </location>
    <ligand>
        <name>GTP</name>
        <dbReference type="ChEBI" id="CHEBI:37565"/>
    </ligand>
</feature>
<feature type="binding site" evidence="8 12">
    <location>
        <position position="139"/>
    </location>
    <ligand>
        <name>GDP</name>
        <dbReference type="ChEBI" id="CHEBI:58189"/>
    </ligand>
</feature>
<feature type="binding site" evidence="8 12">
    <location>
        <position position="166"/>
    </location>
    <ligand>
        <name>GDP</name>
        <dbReference type="ChEBI" id="CHEBI:58189"/>
    </ligand>
</feature>
<feature type="binding site" evidence="7 13">
    <location>
        <position position="166"/>
    </location>
    <ligand>
        <name>GTP</name>
        <dbReference type="ChEBI" id="CHEBI:37565"/>
    </ligand>
</feature>
<feature type="binding site" evidence="8 12">
    <location>
        <position position="167"/>
    </location>
    <ligand>
        <name>GDP</name>
        <dbReference type="ChEBI" id="CHEBI:58189"/>
    </ligand>
</feature>
<feature type="binding site" evidence="7 13">
    <location>
        <position position="167"/>
    </location>
    <ligand>
        <name>GTP</name>
        <dbReference type="ChEBI" id="CHEBI:37565"/>
    </ligand>
</feature>
<feature type="modified residue" description="N-acetylalanine" evidence="2">
    <location>
        <position position="2"/>
    </location>
</feature>
<feature type="modified residue" description="Phosphothreonine; by LRRK2" evidence="6">
    <location>
        <position position="86"/>
    </location>
</feature>
<feature type="modified residue" description="Phosphoserine" evidence="4">
    <location>
        <position position="188"/>
    </location>
</feature>
<feature type="modified residue" description="Phosphoserine" evidence="15">
    <location>
        <position position="190"/>
    </location>
</feature>
<feature type="modified residue" description="Cysteine methyl ester" evidence="1">
    <location>
        <position position="219"/>
    </location>
</feature>
<feature type="lipid moiety-binding region" description="S-geranylgeranyl cysteine" evidence="1">
    <location>
        <position position="217"/>
    </location>
</feature>
<feature type="lipid moiety-binding region" description="S-geranylgeranyl cysteine" evidence="1">
    <location>
        <position position="219"/>
    </location>
</feature>
<feature type="mutagenesis site" description="Loss of phosphorylation. No effect on GDI2, CHM and CHML binding." evidence="6">
    <original>T</original>
    <variation>A</variation>
    <location>
        <position position="86"/>
    </location>
</feature>
<feature type="mutagenesis site" description="Phosphomimetic mutant. Loss of GDI2, CHM and CHML binding." evidence="6">
    <original>T</original>
    <variation>E</variation>
    <location>
        <position position="86"/>
    </location>
</feature>
<feature type="sequence conflict" description="In Ref. 1; AAA60243." evidence="9" ref="1">
    <original>T</original>
    <variation>H</variation>
    <location>
        <position position="9"/>
    </location>
</feature>
<feature type="sequence conflict" description="In Ref. 1; AAA60243." evidence="9" ref="1">
    <original>F</original>
    <variation>L</variation>
    <location>
        <position position="40"/>
    </location>
</feature>
<feature type="strand" evidence="16">
    <location>
        <begin position="18"/>
        <end position="21"/>
    </location>
</feature>
<feature type="strand" evidence="16">
    <location>
        <begin position="23"/>
        <end position="30"/>
    </location>
</feature>
<feature type="helix" evidence="16">
    <location>
        <begin position="35"/>
        <end position="45"/>
    </location>
</feature>
<feature type="strand" evidence="16">
    <location>
        <begin position="51"/>
        <end position="55"/>
    </location>
</feature>
<feature type="turn" evidence="16">
    <location>
        <begin position="56"/>
        <end position="58"/>
    </location>
</feature>
<feature type="strand" evidence="16">
    <location>
        <begin position="59"/>
        <end position="66"/>
    </location>
</feature>
<feature type="turn" evidence="16">
    <location>
        <begin position="67"/>
        <end position="70"/>
    </location>
</feature>
<feature type="strand" evidence="16">
    <location>
        <begin position="71"/>
        <end position="76"/>
    </location>
</feature>
<feature type="helix" evidence="16">
    <location>
        <begin position="78"/>
        <end position="83"/>
    </location>
</feature>
<feature type="helix" evidence="16">
    <location>
        <begin position="85"/>
        <end position="92"/>
    </location>
</feature>
<feature type="strand" evidence="16">
    <location>
        <begin position="97"/>
        <end position="103"/>
    </location>
</feature>
<feature type="helix" evidence="16">
    <location>
        <begin position="107"/>
        <end position="111"/>
    </location>
</feature>
<feature type="helix" evidence="16">
    <location>
        <begin position="113"/>
        <end position="123"/>
    </location>
</feature>
<feature type="strand" evidence="16">
    <location>
        <begin position="129"/>
        <end position="135"/>
    </location>
</feature>
<feature type="helix" evidence="16">
    <location>
        <begin position="140"/>
        <end position="142"/>
    </location>
</feature>
<feature type="helix" evidence="16">
    <location>
        <begin position="147"/>
        <end position="157"/>
    </location>
</feature>
<feature type="strand" evidence="16">
    <location>
        <begin position="160"/>
        <end position="163"/>
    </location>
</feature>
<feature type="turn" evidence="16">
    <location>
        <begin position="166"/>
        <end position="169"/>
    </location>
</feature>
<feature type="helix" evidence="16">
    <location>
        <begin position="172"/>
        <end position="186"/>
    </location>
</feature>
<accession>P20337</accession>
<accession>Q5VUL2</accession>
<accession>Q9BSI1</accession>
<organism>
    <name type="scientific">Homo sapiens</name>
    <name type="common">Human</name>
    <dbReference type="NCBI Taxonomy" id="9606"/>
    <lineage>
        <taxon>Eukaryota</taxon>
        <taxon>Metazoa</taxon>
        <taxon>Chordata</taxon>
        <taxon>Craniata</taxon>
        <taxon>Vertebrata</taxon>
        <taxon>Euteleostomi</taxon>
        <taxon>Mammalia</taxon>
        <taxon>Eutheria</taxon>
        <taxon>Euarchontoglires</taxon>
        <taxon>Primates</taxon>
        <taxon>Haplorrhini</taxon>
        <taxon>Catarrhini</taxon>
        <taxon>Hominidae</taxon>
        <taxon>Homo</taxon>
    </lineage>
</organism>
<comment type="function">
    <text evidence="7">The small GTPases Rab are key regulators of intracellular membrane trafficking, from the formation of transport vesicles to their fusion with membranes (PubMed:35871249). Rabs cycle between an inactive GDP-bound form and an active GTP-bound form that is able to recruit to membranes different sets of downstream effectors directly responsible for vesicle formation, movement, tethering and fusion (PubMed:35871249).</text>
</comment>
<comment type="catalytic activity">
    <reaction evidence="10">
        <text>GTP + H2O = GDP + phosphate + H(+)</text>
        <dbReference type="Rhea" id="RHEA:19669"/>
        <dbReference type="ChEBI" id="CHEBI:15377"/>
        <dbReference type="ChEBI" id="CHEBI:15378"/>
        <dbReference type="ChEBI" id="CHEBI:37565"/>
        <dbReference type="ChEBI" id="CHEBI:43474"/>
        <dbReference type="ChEBI" id="CHEBI:58189"/>
        <dbReference type="EC" id="3.6.5.2"/>
    </reaction>
    <physiologicalReaction direction="left-to-right" evidence="10">
        <dbReference type="Rhea" id="RHEA:19670"/>
    </physiologicalReaction>
</comment>
<comment type="cofactor">
    <cofactor evidence="7">
        <name>Mg(2+)</name>
        <dbReference type="ChEBI" id="CHEBI:18420"/>
    </cofactor>
</comment>
<comment type="activity regulation">
    <text evidence="3">Regulated by guanine nucleotide exchange factors (GEFs) which promote the exchange of bound GDP for free GTP. Regulated by GTPase activating proteins (GAPs) which increase the GTP hydrolysis activity. Inhibited by GDP dissociation inhibitors (GDIs) which prevent Rab-GDP dissociation.</text>
</comment>
<comment type="subunit">
    <text evidence="5 6 7">Interacts with RIMS1, RIMS2, RPH3A and RPH3AL. The GTP-bound form interacts with GAS8/DRC4 (via coiled-coil domains) (By similarity). The GTP-bound form interacts with REP15 (PubMed:35871249). Interacts with GDI2, CHM and CHML; phosphorylation at Thr-86 disrupts these interactions (PubMed:29125462). Interacts with MADD (via uDENN domain); the GTP-bound form is preferred for interaction (By similarity).</text>
</comment>
<comment type="interaction">
    <interactant intactId="EBI-12894629">
        <id>P20337</id>
    </interactant>
    <interactant intactId="EBI-713992">
        <id>P47224</id>
        <label>RABIF</label>
    </interactant>
    <organismsDiffer>false</organismsDiffer>
    <experiments>7</experiments>
</comment>
<comment type="interaction">
    <interactant intactId="EBI-12894629">
        <id>P20337</id>
    </interactant>
    <interactant intactId="EBI-12894399">
        <id>Q9H8Y1</id>
        <label>VRTN</label>
    </interactant>
    <organismsDiffer>false</organismsDiffer>
    <experiments>3</experiments>
</comment>
<comment type="subcellular location">
    <subcellularLocation>
        <location evidence="9">Cell membrane</location>
        <topology evidence="9">Lipid-anchor</topology>
        <orientation evidence="9">Cytoplasmic side</orientation>
    </subcellularLocation>
    <subcellularLocation>
        <location evidence="5">Golgi apparatus</location>
    </subcellularLocation>
    <text evidence="5">Colocalizes with GAS8/DRC4 in the Golgi apparatus.</text>
</comment>
<comment type="domain">
    <text evidence="7">Switch 1, switch 2 and the interswitch regions are characteristic of Rab GTPases and mediate the interactions with Rab downstream effectors. The switch regions undergo conformational changes upon nucleotide binding which drives interaction with specific sets of effector proteins, with most effectors only binding to GTP-bound Rab.</text>
</comment>
<comment type="PTM">
    <text evidence="6">Phosphorylation of Thr-86 in the switch II region by LRRK2 prevents the association of RAB regulatory proteins, including CHM, CHML and RAB GDP dissociation inhibitor GDI2.</text>
</comment>
<comment type="similarity">
    <text evidence="9">Belongs to the small GTPase superfamily. Rab family.</text>
</comment>